<sequence length="426" mass="45835">MNILLSRFRLLLAAALAALSWGAQAQLSIEITGAGATRFPVAIPLFENEGSLPRGITDVVRADLERSGLFSLVDMGLVTLPATAVPDLAGVRARGADAVLAGSLYPQADGRYDVRFRLFDTQKQTELGGLSLRMTPAQNRATAHRIADFVYEKLTGQPGYFATRIAYVVKSGPRYELQIADADGMNAQTALASREPIISPAWAPDGQRLAYVSFEAKKPVVYVHTLATGQRHVVANFKGSNSAPTWAPDGQRLAVVLTKDGQSQLYVLNADGSGLRRMATSPGIDTEPAWSPDGEWIYFSSDRGGSAQIYRIPASGGSAQRVTFEGNYNVTPRLSPDGRSLAFITRNNGRFQVAVMDLATRQTTILTDSSRDESPSFAPNGRMILYATESGGRGVLAAVSSDGRVKQRLSVQAADVREPSWGPLTR</sequence>
<proteinExistence type="inferred from homology"/>
<reference key="1">
    <citation type="journal article" date="2005" name="Arch. Microbiol.">
        <title>The genome sequence of an anaerobic aromatic-degrading denitrifying bacterium, strain EbN1.</title>
        <authorList>
            <person name="Rabus R."/>
            <person name="Kube M."/>
            <person name="Heider J."/>
            <person name="Beck A."/>
            <person name="Heitmann K."/>
            <person name="Widdel F."/>
            <person name="Reinhardt R."/>
        </authorList>
    </citation>
    <scope>NUCLEOTIDE SEQUENCE [LARGE SCALE GENOMIC DNA]</scope>
    <source>
        <strain>DSM 19018 / LMG 30748 / EbN1</strain>
    </source>
</reference>
<organism>
    <name type="scientific">Aromatoleum aromaticum (strain DSM 19018 / LMG 30748 / EbN1)</name>
    <name type="common">Azoarcus sp. (strain EbN1)</name>
    <dbReference type="NCBI Taxonomy" id="76114"/>
    <lineage>
        <taxon>Bacteria</taxon>
        <taxon>Pseudomonadati</taxon>
        <taxon>Pseudomonadota</taxon>
        <taxon>Betaproteobacteria</taxon>
        <taxon>Rhodocyclales</taxon>
        <taxon>Rhodocyclaceae</taxon>
        <taxon>Aromatoleum</taxon>
    </lineage>
</organism>
<name>TOLB_AROAE</name>
<gene>
    <name evidence="1" type="primary">tolB</name>
    <name type="ordered locus">AZOSEA14910</name>
    <name type="ORF">ebA2650</name>
</gene>
<keyword id="KW-0131">Cell cycle</keyword>
<keyword id="KW-0132">Cell division</keyword>
<keyword id="KW-0574">Periplasm</keyword>
<keyword id="KW-1185">Reference proteome</keyword>
<keyword id="KW-0732">Signal</keyword>
<protein>
    <recommendedName>
        <fullName evidence="1">Tol-Pal system protein TolB</fullName>
    </recommendedName>
</protein>
<evidence type="ECO:0000255" key="1">
    <source>
        <dbReference type="HAMAP-Rule" id="MF_00671"/>
    </source>
</evidence>
<feature type="signal peptide" evidence="1">
    <location>
        <begin position="1"/>
        <end position="25"/>
    </location>
</feature>
<feature type="chain" id="PRO_0000034622" description="Tol-Pal system protein TolB" evidence="1">
    <location>
        <begin position="26"/>
        <end position="426"/>
    </location>
</feature>
<accession>Q5P4Z6</accession>
<comment type="function">
    <text evidence="1">Part of the Tol-Pal system, which plays a role in outer membrane invagination during cell division and is important for maintaining outer membrane integrity.</text>
</comment>
<comment type="subunit">
    <text evidence="1">The Tol-Pal system is composed of five core proteins: the inner membrane proteins TolA, TolQ and TolR, the periplasmic protein TolB and the outer membrane protein Pal. They form a network linking the inner and outer membranes and the peptidoglycan layer.</text>
</comment>
<comment type="subcellular location">
    <subcellularLocation>
        <location evidence="1">Periplasm</location>
    </subcellularLocation>
</comment>
<comment type="similarity">
    <text evidence="1">Belongs to the TolB family.</text>
</comment>
<dbReference type="EMBL" id="CR555306">
    <property type="protein sequence ID" value="CAI07616.1"/>
    <property type="molecule type" value="Genomic_DNA"/>
</dbReference>
<dbReference type="RefSeq" id="WP_011237334.1">
    <property type="nucleotide sequence ID" value="NC_006513.1"/>
</dbReference>
<dbReference type="SMR" id="Q5P4Z6"/>
<dbReference type="STRING" id="76114.ebA2650"/>
<dbReference type="KEGG" id="eba:ebA2650"/>
<dbReference type="eggNOG" id="COG0823">
    <property type="taxonomic scope" value="Bacteria"/>
</dbReference>
<dbReference type="HOGENOM" id="CLU_047123_0_0_4"/>
<dbReference type="OrthoDB" id="9802240at2"/>
<dbReference type="Proteomes" id="UP000006552">
    <property type="component" value="Chromosome"/>
</dbReference>
<dbReference type="GO" id="GO:0042597">
    <property type="term" value="C:periplasmic space"/>
    <property type="evidence" value="ECO:0007669"/>
    <property type="project" value="UniProtKB-SubCell"/>
</dbReference>
<dbReference type="GO" id="GO:0051301">
    <property type="term" value="P:cell division"/>
    <property type="evidence" value="ECO:0007669"/>
    <property type="project" value="UniProtKB-UniRule"/>
</dbReference>
<dbReference type="GO" id="GO:0017038">
    <property type="term" value="P:protein import"/>
    <property type="evidence" value="ECO:0007669"/>
    <property type="project" value="InterPro"/>
</dbReference>
<dbReference type="Gene3D" id="2.120.10.30">
    <property type="entry name" value="TolB, C-terminal domain"/>
    <property type="match status" value="1"/>
</dbReference>
<dbReference type="Gene3D" id="3.40.50.10070">
    <property type="entry name" value="TolB, N-terminal domain"/>
    <property type="match status" value="1"/>
</dbReference>
<dbReference type="HAMAP" id="MF_00671">
    <property type="entry name" value="TolB"/>
    <property type="match status" value="1"/>
</dbReference>
<dbReference type="InterPro" id="IPR011042">
    <property type="entry name" value="6-blade_b-propeller_TolB-like"/>
</dbReference>
<dbReference type="InterPro" id="IPR011659">
    <property type="entry name" value="PD40"/>
</dbReference>
<dbReference type="InterPro" id="IPR014167">
    <property type="entry name" value="Tol-Pal_TolB"/>
</dbReference>
<dbReference type="InterPro" id="IPR007195">
    <property type="entry name" value="TolB_N"/>
</dbReference>
<dbReference type="NCBIfam" id="TIGR02800">
    <property type="entry name" value="propeller_TolB"/>
    <property type="match status" value="1"/>
</dbReference>
<dbReference type="PANTHER" id="PTHR36842:SF1">
    <property type="entry name" value="PROTEIN TOLB"/>
    <property type="match status" value="1"/>
</dbReference>
<dbReference type="PANTHER" id="PTHR36842">
    <property type="entry name" value="PROTEIN TOLB HOMOLOG"/>
    <property type="match status" value="1"/>
</dbReference>
<dbReference type="Pfam" id="PF07676">
    <property type="entry name" value="PD40"/>
    <property type="match status" value="5"/>
</dbReference>
<dbReference type="Pfam" id="PF04052">
    <property type="entry name" value="TolB_N"/>
    <property type="match status" value="1"/>
</dbReference>
<dbReference type="SUPFAM" id="SSF52964">
    <property type="entry name" value="TolB, N-terminal domain"/>
    <property type="match status" value="1"/>
</dbReference>
<dbReference type="SUPFAM" id="SSF69304">
    <property type="entry name" value="Tricorn protease N-terminal domain"/>
    <property type="match status" value="1"/>
</dbReference>